<comment type="function">
    <text evidence="1">Required for the formation of a threonylcarbamoyl group on adenosine at position 37 (t(6)A37) in tRNAs that read codons beginning with adenine. Is involved in the transfer of the threonylcarbamoyl moiety of threonylcarbamoyl-AMP (TC-AMP) to the N6 group of A37, together with TsaD and TsaE; this reaction does not require ATP in vitro. TsaB seems to play an indirect role in the t(6)A biosynthesis pathway, possibly in regulating the core enzymatic function of TsaD (By similarity).</text>
</comment>
<comment type="subcellular location">
    <subcellularLocation>
        <location evidence="1">Cytoplasm</location>
    </subcellularLocation>
</comment>
<comment type="similarity">
    <text evidence="2">Belongs to the KAE1 / TsaD family. TsaB subfamily.</text>
</comment>
<organism>
    <name type="scientific">Buchnera aphidicola subsp. Schizaphis graminum (strain Sg)</name>
    <dbReference type="NCBI Taxonomy" id="198804"/>
    <lineage>
        <taxon>Bacteria</taxon>
        <taxon>Pseudomonadati</taxon>
        <taxon>Pseudomonadota</taxon>
        <taxon>Gammaproteobacteria</taxon>
        <taxon>Enterobacterales</taxon>
        <taxon>Erwiniaceae</taxon>
        <taxon>Buchnera</taxon>
    </lineage>
</organism>
<name>TSAB_BUCAP</name>
<protein>
    <recommendedName>
        <fullName>tRNA threonylcarbamoyladenosine biosynthesis protein TsaB</fullName>
    </recommendedName>
    <alternativeName>
        <fullName>t(6)A37 threonylcarbamoyladenosine biosynthesis protein TsaB</fullName>
    </alternativeName>
</protein>
<gene>
    <name type="primary">tsaB</name>
    <name type="ordered locus">BUsg_315</name>
</gene>
<dbReference type="EMBL" id="AE013218">
    <property type="protein sequence ID" value="AAM67869.1"/>
    <property type="molecule type" value="Genomic_DNA"/>
</dbReference>
<dbReference type="RefSeq" id="WP_011053836.1">
    <property type="nucleotide sequence ID" value="NC_004061.1"/>
</dbReference>
<dbReference type="SMR" id="Q8K9L9"/>
<dbReference type="STRING" id="198804.BUsg_315"/>
<dbReference type="GeneID" id="93003784"/>
<dbReference type="KEGG" id="bas:BUsg_315"/>
<dbReference type="eggNOG" id="COG1214">
    <property type="taxonomic scope" value="Bacteria"/>
</dbReference>
<dbReference type="HOGENOM" id="CLU_064886_2_0_6"/>
<dbReference type="Proteomes" id="UP000000416">
    <property type="component" value="Chromosome"/>
</dbReference>
<dbReference type="GO" id="GO:0005829">
    <property type="term" value="C:cytosol"/>
    <property type="evidence" value="ECO:0007669"/>
    <property type="project" value="TreeGrafter"/>
</dbReference>
<dbReference type="GO" id="GO:0002949">
    <property type="term" value="P:tRNA threonylcarbamoyladenosine modification"/>
    <property type="evidence" value="ECO:0007669"/>
    <property type="project" value="InterPro"/>
</dbReference>
<dbReference type="CDD" id="cd24032">
    <property type="entry name" value="ASKHA_NBD_TsaB"/>
    <property type="match status" value="1"/>
</dbReference>
<dbReference type="Gene3D" id="3.30.420.40">
    <property type="match status" value="2"/>
</dbReference>
<dbReference type="InterPro" id="IPR043129">
    <property type="entry name" value="ATPase_NBD"/>
</dbReference>
<dbReference type="InterPro" id="IPR000905">
    <property type="entry name" value="Gcp-like_dom"/>
</dbReference>
<dbReference type="InterPro" id="IPR022496">
    <property type="entry name" value="T6A_TsaB"/>
</dbReference>
<dbReference type="NCBIfam" id="TIGR03725">
    <property type="entry name" value="T6A_YeaZ"/>
    <property type="match status" value="1"/>
</dbReference>
<dbReference type="PANTHER" id="PTHR11735">
    <property type="entry name" value="TRNA N6-ADENOSINE THREONYLCARBAMOYLTRANSFERASE"/>
    <property type="match status" value="1"/>
</dbReference>
<dbReference type="PANTHER" id="PTHR11735:SF11">
    <property type="entry name" value="TRNA THREONYLCARBAMOYLADENOSINE BIOSYNTHESIS PROTEIN TSAB"/>
    <property type="match status" value="1"/>
</dbReference>
<dbReference type="Pfam" id="PF00814">
    <property type="entry name" value="TsaD"/>
    <property type="match status" value="1"/>
</dbReference>
<dbReference type="SUPFAM" id="SSF53067">
    <property type="entry name" value="Actin-like ATPase domain"/>
    <property type="match status" value="2"/>
</dbReference>
<feature type="chain" id="PRO_0000096993" description="tRNA threonylcarbamoyladenosine biosynthesis protein TsaB">
    <location>
        <begin position="1"/>
        <end position="210"/>
    </location>
</feature>
<reference key="1">
    <citation type="journal article" date="2002" name="Science">
        <title>50 million years of genomic stasis in endosymbiotic bacteria.</title>
        <authorList>
            <person name="Tamas I."/>
            <person name="Klasson L."/>
            <person name="Canbaeck B."/>
            <person name="Naeslund A.K."/>
            <person name="Eriksson A.-S."/>
            <person name="Wernegreen J.J."/>
            <person name="Sandstroem J.P."/>
            <person name="Moran N.A."/>
            <person name="Andersson S.G.E."/>
        </authorList>
    </citation>
    <scope>NUCLEOTIDE SEQUENCE [LARGE SCALE GENOMIC DNA]</scope>
    <source>
        <strain>Sg</strain>
    </source>
</reference>
<accession>Q8K9L9</accession>
<keyword id="KW-0963">Cytoplasm</keyword>
<keyword id="KW-0819">tRNA processing</keyword>
<proteinExistence type="inferred from homology"/>
<sequence length="210" mass="24122">MSDIILAIDTSIDHCSVAVYKKKVIYSLSENCKKEHTIKILPMIKKVLMNAKITLKDLNYVAFSKGPGKFTGIRISIGIAQSLSLSLKIPIFGISTLSILAQKAWRKYKKKQILVAVNAKIGQVYWGEYLRNNTLLWTGEKTESLIKINKIEDKMKKLKKKWILVGDGWKKIKRENSLKFEQKKILYPNAKDIIPFLFSENSKPRILSFF</sequence>
<evidence type="ECO:0000250" key="1"/>
<evidence type="ECO:0000305" key="2"/>